<organism>
    <name type="scientific">Streptococcus agalactiae serotype III (strain NEM316)</name>
    <dbReference type="NCBI Taxonomy" id="211110"/>
    <lineage>
        <taxon>Bacteria</taxon>
        <taxon>Bacillati</taxon>
        <taxon>Bacillota</taxon>
        <taxon>Bacilli</taxon>
        <taxon>Lactobacillales</taxon>
        <taxon>Streptococcaceae</taxon>
        <taxon>Streptococcus</taxon>
    </lineage>
</organism>
<gene>
    <name evidence="1" type="primary">rpsK</name>
    <name type="ordered locus">gbs0083</name>
</gene>
<reference key="1">
    <citation type="journal article" date="2002" name="Mol. Microbiol.">
        <title>Genome sequence of Streptococcus agalactiae, a pathogen causing invasive neonatal disease.</title>
        <authorList>
            <person name="Glaser P."/>
            <person name="Rusniok C."/>
            <person name="Buchrieser C."/>
            <person name="Chevalier F."/>
            <person name="Frangeul L."/>
            <person name="Msadek T."/>
            <person name="Zouine M."/>
            <person name="Couve E."/>
            <person name="Lalioui L."/>
            <person name="Poyart C."/>
            <person name="Trieu-Cuot P."/>
            <person name="Kunst F."/>
        </authorList>
    </citation>
    <scope>NUCLEOTIDE SEQUENCE [LARGE SCALE GENOMIC DNA]</scope>
    <source>
        <strain>NEM316</strain>
    </source>
</reference>
<name>RS11_STRA3</name>
<protein>
    <recommendedName>
        <fullName evidence="1">Small ribosomal subunit protein uS11</fullName>
    </recommendedName>
    <alternativeName>
        <fullName evidence="2">30S ribosomal protein S11</fullName>
    </alternativeName>
</protein>
<accession>P66363</accession>
<accession>Q8K8X0</accession>
<accession>Q8P2Z3</accession>
<keyword id="KW-0687">Ribonucleoprotein</keyword>
<keyword id="KW-0689">Ribosomal protein</keyword>
<keyword id="KW-0694">RNA-binding</keyword>
<keyword id="KW-0699">rRNA-binding</keyword>
<sequence length="127" mass="13369">MAKPTRKRRVKKNIESGVAHIHATFNNTIVMITDVHGNALAWSSAGALGFKGSRKSTPFAAQMAAEAAAKSAQEHGLKTVEVTVKGPGSGRESAIRALAAAGLEVTAIRDVTPVPHNGARPPKRRRV</sequence>
<proteinExistence type="inferred from homology"/>
<evidence type="ECO:0000255" key="1">
    <source>
        <dbReference type="HAMAP-Rule" id="MF_01310"/>
    </source>
</evidence>
<evidence type="ECO:0000305" key="2"/>
<comment type="function">
    <text evidence="1">Located on the platform of the 30S subunit, it bridges several disparate RNA helices of the 16S rRNA. Forms part of the Shine-Dalgarno cleft in the 70S ribosome.</text>
</comment>
<comment type="subunit">
    <text evidence="1">Part of the 30S ribosomal subunit. Interacts with proteins S7 and S18. Binds to IF-3.</text>
</comment>
<comment type="similarity">
    <text evidence="1">Belongs to the universal ribosomal protein uS11 family.</text>
</comment>
<dbReference type="EMBL" id="AL766843">
    <property type="protein sequence ID" value="CAD45728.1"/>
    <property type="molecule type" value="Genomic_DNA"/>
</dbReference>
<dbReference type="RefSeq" id="WP_001118387.1">
    <property type="nucleotide sequence ID" value="NC_004368.1"/>
</dbReference>
<dbReference type="SMR" id="P66363"/>
<dbReference type="GeneID" id="93825319"/>
<dbReference type="KEGG" id="san:rpsK"/>
<dbReference type="eggNOG" id="COG0100">
    <property type="taxonomic scope" value="Bacteria"/>
</dbReference>
<dbReference type="HOGENOM" id="CLU_072439_5_0_9"/>
<dbReference type="Proteomes" id="UP000000823">
    <property type="component" value="Chromosome"/>
</dbReference>
<dbReference type="GO" id="GO:1990904">
    <property type="term" value="C:ribonucleoprotein complex"/>
    <property type="evidence" value="ECO:0007669"/>
    <property type="project" value="UniProtKB-KW"/>
</dbReference>
<dbReference type="GO" id="GO:0005840">
    <property type="term" value="C:ribosome"/>
    <property type="evidence" value="ECO:0007669"/>
    <property type="project" value="UniProtKB-KW"/>
</dbReference>
<dbReference type="GO" id="GO:0019843">
    <property type="term" value="F:rRNA binding"/>
    <property type="evidence" value="ECO:0007669"/>
    <property type="project" value="UniProtKB-UniRule"/>
</dbReference>
<dbReference type="GO" id="GO:0003735">
    <property type="term" value="F:structural constituent of ribosome"/>
    <property type="evidence" value="ECO:0007669"/>
    <property type="project" value="InterPro"/>
</dbReference>
<dbReference type="GO" id="GO:0006412">
    <property type="term" value="P:translation"/>
    <property type="evidence" value="ECO:0007669"/>
    <property type="project" value="UniProtKB-UniRule"/>
</dbReference>
<dbReference type="FunFam" id="3.30.420.80:FF:000001">
    <property type="entry name" value="30S ribosomal protein S11"/>
    <property type="match status" value="1"/>
</dbReference>
<dbReference type="Gene3D" id="3.30.420.80">
    <property type="entry name" value="Ribosomal protein S11"/>
    <property type="match status" value="1"/>
</dbReference>
<dbReference type="HAMAP" id="MF_01310">
    <property type="entry name" value="Ribosomal_uS11"/>
    <property type="match status" value="1"/>
</dbReference>
<dbReference type="InterPro" id="IPR001971">
    <property type="entry name" value="Ribosomal_uS11"/>
</dbReference>
<dbReference type="InterPro" id="IPR019981">
    <property type="entry name" value="Ribosomal_uS11_bac-type"/>
</dbReference>
<dbReference type="InterPro" id="IPR018102">
    <property type="entry name" value="Ribosomal_uS11_CS"/>
</dbReference>
<dbReference type="InterPro" id="IPR036967">
    <property type="entry name" value="Ribosomal_uS11_sf"/>
</dbReference>
<dbReference type="NCBIfam" id="NF003698">
    <property type="entry name" value="PRK05309.1"/>
    <property type="match status" value="1"/>
</dbReference>
<dbReference type="NCBIfam" id="TIGR03632">
    <property type="entry name" value="uS11_bact"/>
    <property type="match status" value="1"/>
</dbReference>
<dbReference type="PANTHER" id="PTHR11759">
    <property type="entry name" value="40S RIBOSOMAL PROTEIN S14/30S RIBOSOMAL PROTEIN S11"/>
    <property type="match status" value="1"/>
</dbReference>
<dbReference type="Pfam" id="PF00411">
    <property type="entry name" value="Ribosomal_S11"/>
    <property type="match status" value="1"/>
</dbReference>
<dbReference type="PIRSF" id="PIRSF002131">
    <property type="entry name" value="Ribosomal_S11"/>
    <property type="match status" value="1"/>
</dbReference>
<dbReference type="SUPFAM" id="SSF53137">
    <property type="entry name" value="Translational machinery components"/>
    <property type="match status" value="1"/>
</dbReference>
<dbReference type="PROSITE" id="PS00054">
    <property type="entry name" value="RIBOSOMAL_S11"/>
    <property type="match status" value="1"/>
</dbReference>
<feature type="chain" id="PRO_0000123228" description="Small ribosomal subunit protein uS11">
    <location>
        <begin position="1"/>
        <end position="127"/>
    </location>
</feature>